<sequence length="38" mass="4451">MKVRPSVKPICEYCKVIRRNGRVMVICPTNPKHKQRQG</sequence>
<dbReference type="EMBL" id="AM295007">
    <property type="protein sequence ID" value="CAM29409.1"/>
    <property type="molecule type" value="Genomic_DNA"/>
</dbReference>
<dbReference type="RefSeq" id="WP_000868345.1">
    <property type="nucleotide sequence ID" value="NC_009332.1"/>
</dbReference>
<dbReference type="SMR" id="A2RC37"/>
<dbReference type="GeneID" id="93860206"/>
<dbReference type="KEGG" id="spf:SpyM50066A"/>
<dbReference type="HOGENOM" id="CLU_135723_6_2_9"/>
<dbReference type="GO" id="GO:0005737">
    <property type="term" value="C:cytoplasm"/>
    <property type="evidence" value="ECO:0007669"/>
    <property type="project" value="UniProtKB-ARBA"/>
</dbReference>
<dbReference type="GO" id="GO:1990904">
    <property type="term" value="C:ribonucleoprotein complex"/>
    <property type="evidence" value="ECO:0007669"/>
    <property type="project" value="UniProtKB-KW"/>
</dbReference>
<dbReference type="GO" id="GO:0005840">
    <property type="term" value="C:ribosome"/>
    <property type="evidence" value="ECO:0007669"/>
    <property type="project" value="UniProtKB-KW"/>
</dbReference>
<dbReference type="GO" id="GO:0003735">
    <property type="term" value="F:structural constituent of ribosome"/>
    <property type="evidence" value="ECO:0007669"/>
    <property type="project" value="InterPro"/>
</dbReference>
<dbReference type="GO" id="GO:0006412">
    <property type="term" value="P:translation"/>
    <property type="evidence" value="ECO:0007669"/>
    <property type="project" value="UniProtKB-UniRule"/>
</dbReference>
<dbReference type="HAMAP" id="MF_00251">
    <property type="entry name" value="Ribosomal_bL36"/>
    <property type="match status" value="1"/>
</dbReference>
<dbReference type="InterPro" id="IPR000473">
    <property type="entry name" value="Ribosomal_bL36"/>
</dbReference>
<dbReference type="InterPro" id="IPR035977">
    <property type="entry name" value="Ribosomal_bL36_sp"/>
</dbReference>
<dbReference type="NCBIfam" id="TIGR01022">
    <property type="entry name" value="rpmJ_bact"/>
    <property type="match status" value="1"/>
</dbReference>
<dbReference type="PANTHER" id="PTHR42888">
    <property type="entry name" value="50S RIBOSOMAL PROTEIN L36, CHLOROPLASTIC"/>
    <property type="match status" value="1"/>
</dbReference>
<dbReference type="PANTHER" id="PTHR42888:SF1">
    <property type="entry name" value="LARGE RIBOSOMAL SUBUNIT PROTEIN BL36C"/>
    <property type="match status" value="1"/>
</dbReference>
<dbReference type="Pfam" id="PF00444">
    <property type="entry name" value="Ribosomal_L36"/>
    <property type="match status" value="1"/>
</dbReference>
<dbReference type="SUPFAM" id="SSF57840">
    <property type="entry name" value="Ribosomal protein L36"/>
    <property type="match status" value="1"/>
</dbReference>
<dbReference type="PROSITE" id="PS00828">
    <property type="entry name" value="RIBOSOMAL_L36"/>
    <property type="match status" value="1"/>
</dbReference>
<organism>
    <name type="scientific">Streptococcus pyogenes serotype M5 (strain Manfredo)</name>
    <dbReference type="NCBI Taxonomy" id="160491"/>
    <lineage>
        <taxon>Bacteria</taxon>
        <taxon>Bacillati</taxon>
        <taxon>Bacillota</taxon>
        <taxon>Bacilli</taxon>
        <taxon>Lactobacillales</taxon>
        <taxon>Streptococcaceae</taxon>
        <taxon>Streptococcus</taxon>
    </lineage>
</organism>
<comment type="similarity">
    <text evidence="1">Belongs to the bacterial ribosomal protein bL36 family.</text>
</comment>
<name>RL36_STRPG</name>
<feature type="chain" id="PRO_0000302312" description="Large ribosomal subunit protein bL36">
    <location>
        <begin position="1"/>
        <end position="38"/>
    </location>
</feature>
<protein>
    <recommendedName>
        <fullName evidence="1">Large ribosomal subunit protein bL36</fullName>
    </recommendedName>
    <alternativeName>
        <fullName evidence="2">50S ribosomal protein L36</fullName>
    </alternativeName>
</protein>
<proteinExistence type="inferred from homology"/>
<evidence type="ECO:0000255" key="1">
    <source>
        <dbReference type="HAMAP-Rule" id="MF_00251"/>
    </source>
</evidence>
<evidence type="ECO:0000305" key="2"/>
<keyword id="KW-0687">Ribonucleoprotein</keyword>
<keyword id="KW-0689">Ribosomal protein</keyword>
<gene>
    <name evidence="1" type="primary">rpmJ</name>
    <name type="ordered locus">SpyM50066.1</name>
    <name type="ORF">SpyM50066A</name>
</gene>
<reference key="1">
    <citation type="journal article" date="2007" name="J. Bacteriol.">
        <title>Complete genome of acute rheumatic fever-associated serotype M5 Streptococcus pyogenes strain Manfredo.</title>
        <authorList>
            <person name="Holden M.T.G."/>
            <person name="Scott A."/>
            <person name="Cherevach I."/>
            <person name="Chillingworth T."/>
            <person name="Churcher C."/>
            <person name="Cronin A."/>
            <person name="Dowd L."/>
            <person name="Feltwell T."/>
            <person name="Hamlin N."/>
            <person name="Holroyd S."/>
            <person name="Jagels K."/>
            <person name="Moule S."/>
            <person name="Mungall K."/>
            <person name="Quail M.A."/>
            <person name="Price C."/>
            <person name="Rabbinowitsch E."/>
            <person name="Sharp S."/>
            <person name="Skelton J."/>
            <person name="Whitehead S."/>
            <person name="Barrell B.G."/>
            <person name="Kehoe M."/>
            <person name="Parkhill J."/>
        </authorList>
    </citation>
    <scope>NUCLEOTIDE SEQUENCE [LARGE SCALE GENOMIC DNA]</scope>
    <source>
        <strain>Manfredo</strain>
    </source>
</reference>
<accession>A2RC37</accession>